<keyword id="KW-0998">Cell outer membrane</keyword>
<keyword id="KW-0903">Direct protein sequencing</keyword>
<keyword id="KW-0406">Ion transport</keyword>
<keyword id="KW-0408">Iron</keyword>
<keyword id="KW-0410">Iron transport</keyword>
<keyword id="KW-0472">Membrane</keyword>
<keyword id="KW-0675">Receptor</keyword>
<keyword id="KW-0732">Signal</keyword>
<keyword id="KW-0798">TonB box</keyword>
<keyword id="KW-0812">Transmembrane</keyword>
<keyword id="KW-1134">Transmembrane beta strand</keyword>
<keyword id="KW-0813">Transport</keyword>
<evidence type="ECO:0000255" key="1">
    <source>
        <dbReference type="PROSITE-ProRule" id="PRU01360"/>
    </source>
</evidence>
<evidence type="ECO:0000269" key="2">
    <source>
    </source>
</evidence>
<evidence type="ECO:0000305" key="3"/>
<sequence>MNQTISSRAPQKRLAPRLLCVMIGAALGTLSASSWAAAATDSTAENAKKTSATAATAKAEDSKTNDTITVVGAQETFRAGGNDLIPTYLDGQVANGGRIGFLGQQDARNVPFNVIGYTSKMIEDQQANSIADVVKNDASVQNVRGYGNPSQNYRIRGYNLDGDDISFGGLFGVLPRQIVSTSMVERVEVFKGANAFINGISPSGSGVGGMINLEPKRAGDTPLTRVTVDYGSASQVGGALDVGRRYGDDDQFGVRVNVLHREGESAIHDQKERTTAVSTGLDYRGDRARTSLDVGYQKQTIHHMRTDVAIGGATVIPEPPSSTLNYGQSWVYTDMETTFGMLRSEYDVSQNWTVYGSVGASRNEETGQYGAPMLTNNNGDATISRLYVPYVADSVAGLGGIRGHFDTGPITHKVNLGYAANYRTTKSAWNMSGQEDTNIYNPGVIGFPQTVMGSDSQDPQLTSQVRASGLSLSDTLSMMDDKVSLMLGVRRQEVTIRNFDSGVPNSAGSLDAMKVTPIYGIMVKPWEKVSLYANHIEALGPGKSAPYQYNGKPVVNAGQIPGIIHSKQNEIGVKFDNQRYGGTLALFEITRPTGMVDPATNVYGFYGEQRNRGIELNVFGEPVFGTRLLASATWLDPKLTKAADSANNGNDAVGVANYQLVFGGEYDIPVVEGLTATGTVVRSGSQYANEANTLKLKPWTRLDLGVRYTMPMKDTSLTWRANIENVTNERYWESVEDSGTYIYQGDPRALKLSVSMDF</sequence>
<organism>
    <name type="scientific">Yersinia enterocolitica</name>
    <dbReference type="NCBI Taxonomy" id="630"/>
    <lineage>
        <taxon>Bacteria</taxon>
        <taxon>Pseudomonadati</taxon>
        <taxon>Pseudomonadota</taxon>
        <taxon>Gammaproteobacteria</taxon>
        <taxon>Enterobacterales</taxon>
        <taxon>Yersiniaceae</taxon>
        <taxon>Yersinia</taxon>
    </lineage>
</organism>
<feature type="signal peptide" evidence="2">
    <location>
        <begin position="1"/>
        <end position="36"/>
    </location>
</feature>
<feature type="chain" id="PRO_0000034753" description="Ferrichrome receptor FcuA">
    <location>
        <begin position="37"/>
        <end position="758"/>
    </location>
</feature>
<feature type="domain" description="TBDR plug" evidence="1">
    <location>
        <begin position="106"/>
        <end position="216"/>
    </location>
</feature>
<feature type="domain" description="TBDR beta-barrel" evidence="1">
    <location>
        <begin position="221"/>
        <end position="758"/>
    </location>
</feature>
<feature type="short sequence motif" description="TonB box">
    <location>
        <begin position="66"/>
        <end position="73"/>
    </location>
</feature>
<feature type="short sequence motif" description="TonB C-terminal box">
    <location>
        <begin position="741"/>
        <end position="758"/>
    </location>
</feature>
<gene>
    <name type="primary">fcuA</name>
</gene>
<name>FCUA_YEREN</name>
<accession>Q05202</accession>
<proteinExistence type="evidence at protein level"/>
<reference key="1">
    <citation type="journal article" date="1993" name="Mol. Microbiol.">
        <title>The TonB-dependent ferrichrome receptor FcuA of Yersinia enterocolitica: evidence against a strict co-evolution of receptor structure and substrate specificity.</title>
        <authorList>
            <person name="Koebnik R."/>
            <person name="Hantke K."/>
            <person name="Braun V."/>
        </authorList>
    </citation>
    <scope>NUCLEOTIDE SEQUENCE [GENOMIC DNA]</scope>
    <scope>PROTEIN SEQUENCE OF 1-5 (PRECURSOR PROTEIN)</scope>
    <scope>PROTEIN SEQUENCE OF 37-46</scope>
    <source>
        <strain>Serotype O:8</strain>
    </source>
</reference>
<comment type="function">
    <text>Receptor for the hydroxamate siderophore, ferrichrome. Binds also to most other ferrichrome derivatives except enantio ferrichrome and ferric rhodotorulate.</text>
</comment>
<comment type="subcellular location">
    <subcellularLocation>
        <location evidence="1">Cell outer membrane</location>
        <topology evidence="1">Multi-pass membrane protein</topology>
    </subcellularLocation>
</comment>
<comment type="induction">
    <text>By iron starvation. Iron regulation mediated through the Fur protein.</text>
</comment>
<comment type="similarity">
    <text evidence="3">Belongs to the TonB-dependent receptor family.</text>
</comment>
<dbReference type="EMBL" id="X67331">
    <property type="protein sequence ID" value="CAA47746.1"/>
    <property type="molecule type" value="Genomic_DNA"/>
</dbReference>
<dbReference type="PIR" id="S30948">
    <property type="entry name" value="S30948"/>
</dbReference>
<dbReference type="RefSeq" id="WP_005170503.1">
    <property type="nucleotide sequence ID" value="NZ_NWMR01000055.1"/>
</dbReference>
<dbReference type="SMR" id="Q05202"/>
<dbReference type="STRING" id="1443113.LC20_03161"/>
<dbReference type="TCDB" id="1.B.14.1.15">
    <property type="family name" value="the outer membrane receptor (omr) family"/>
</dbReference>
<dbReference type="KEGG" id="yew:CH47_1170"/>
<dbReference type="GO" id="GO:0009279">
    <property type="term" value="C:cell outer membrane"/>
    <property type="evidence" value="ECO:0007669"/>
    <property type="project" value="UniProtKB-SubCell"/>
</dbReference>
<dbReference type="GO" id="GO:0015344">
    <property type="term" value="F:siderophore uptake transmembrane transporter activity"/>
    <property type="evidence" value="ECO:0007669"/>
    <property type="project" value="TreeGrafter"/>
</dbReference>
<dbReference type="GO" id="GO:0038023">
    <property type="term" value="F:signaling receptor activity"/>
    <property type="evidence" value="ECO:0007669"/>
    <property type="project" value="InterPro"/>
</dbReference>
<dbReference type="CDD" id="cd01347">
    <property type="entry name" value="ligand_gated_channel"/>
    <property type="match status" value="1"/>
</dbReference>
<dbReference type="Gene3D" id="2.40.170.20">
    <property type="entry name" value="TonB-dependent receptor, beta-barrel domain"/>
    <property type="match status" value="1"/>
</dbReference>
<dbReference type="Gene3D" id="2.170.130.10">
    <property type="entry name" value="TonB-dependent receptor, plug domain"/>
    <property type="match status" value="1"/>
</dbReference>
<dbReference type="InterPro" id="IPR012910">
    <property type="entry name" value="Plug_dom"/>
</dbReference>
<dbReference type="InterPro" id="IPR037066">
    <property type="entry name" value="Plug_dom_sf"/>
</dbReference>
<dbReference type="InterPro" id="IPR039426">
    <property type="entry name" value="TonB-dep_rcpt-like"/>
</dbReference>
<dbReference type="InterPro" id="IPR000531">
    <property type="entry name" value="TonB-dep_rcpt_b-brl"/>
</dbReference>
<dbReference type="InterPro" id="IPR010916">
    <property type="entry name" value="TonB_box_CS"/>
</dbReference>
<dbReference type="InterPro" id="IPR036942">
    <property type="entry name" value="TonB_rcpt_b-brl_sf"/>
</dbReference>
<dbReference type="InterPro" id="IPR010917">
    <property type="entry name" value="TonB_rcpt_CS"/>
</dbReference>
<dbReference type="InterPro" id="IPR010105">
    <property type="entry name" value="TonB_sidphr_rcpt"/>
</dbReference>
<dbReference type="NCBIfam" id="TIGR01783">
    <property type="entry name" value="TonB-siderophor"/>
    <property type="match status" value="1"/>
</dbReference>
<dbReference type="PANTHER" id="PTHR32552:SF82">
    <property type="entry name" value="FCUA PROTEIN"/>
    <property type="match status" value="1"/>
</dbReference>
<dbReference type="PANTHER" id="PTHR32552">
    <property type="entry name" value="FERRICHROME IRON RECEPTOR-RELATED"/>
    <property type="match status" value="1"/>
</dbReference>
<dbReference type="Pfam" id="PF07715">
    <property type="entry name" value="Plug"/>
    <property type="match status" value="1"/>
</dbReference>
<dbReference type="Pfam" id="PF00593">
    <property type="entry name" value="TonB_dep_Rec_b-barrel"/>
    <property type="match status" value="1"/>
</dbReference>
<dbReference type="SUPFAM" id="SSF56935">
    <property type="entry name" value="Porins"/>
    <property type="match status" value="1"/>
</dbReference>
<dbReference type="PROSITE" id="PS00430">
    <property type="entry name" value="TONB_DEPENDENT_REC_1"/>
    <property type="match status" value="1"/>
</dbReference>
<dbReference type="PROSITE" id="PS01156">
    <property type="entry name" value="TONB_DEPENDENT_REC_2"/>
    <property type="match status" value="1"/>
</dbReference>
<dbReference type="PROSITE" id="PS52016">
    <property type="entry name" value="TONB_DEPENDENT_REC_3"/>
    <property type="match status" value="1"/>
</dbReference>
<protein>
    <recommendedName>
        <fullName>Ferrichrome receptor FcuA</fullName>
    </recommendedName>
</protein>